<feature type="chain" id="PRO_0000267021" description="Enolase">
    <location>
        <begin position="1"/>
        <end position="432"/>
    </location>
</feature>
<feature type="active site" description="Proton donor" evidence="1">
    <location>
        <position position="209"/>
    </location>
</feature>
<feature type="active site" description="Proton acceptor" evidence="1">
    <location>
        <position position="343"/>
    </location>
</feature>
<feature type="binding site" evidence="1">
    <location>
        <position position="167"/>
    </location>
    <ligand>
        <name>(2R)-2-phosphoglycerate</name>
        <dbReference type="ChEBI" id="CHEBI:58289"/>
    </ligand>
</feature>
<feature type="binding site" evidence="1">
    <location>
        <position position="246"/>
    </location>
    <ligand>
        <name>Mg(2+)</name>
        <dbReference type="ChEBI" id="CHEBI:18420"/>
    </ligand>
</feature>
<feature type="binding site" evidence="1">
    <location>
        <position position="291"/>
    </location>
    <ligand>
        <name>Mg(2+)</name>
        <dbReference type="ChEBI" id="CHEBI:18420"/>
    </ligand>
</feature>
<feature type="binding site" evidence="1">
    <location>
        <position position="318"/>
    </location>
    <ligand>
        <name>Mg(2+)</name>
        <dbReference type="ChEBI" id="CHEBI:18420"/>
    </ligand>
</feature>
<feature type="binding site" evidence="1">
    <location>
        <position position="343"/>
    </location>
    <ligand>
        <name>(2R)-2-phosphoglycerate</name>
        <dbReference type="ChEBI" id="CHEBI:58289"/>
    </ligand>
</feature>
<feature type="binding site" evidence="1">
    <location>
        <position position="372"/>
    </location>
    <ligand>
        <name>(2R)-2-phosphoglycerate</name>
        <dbReference type="ChEBI" id="CHEBI:58289"/>
    </ligand>
</feature>
<feature type="binding site" evidence="1">
    <location>
        <position position="373"/>
    </location>
    <ligand>
        <name>(2R)-2-phosphoglycerate</name>
        <dbReference type="ChEBI" id="CHEBI:58289"/>
    </ligand>
</feature>
<feature type="binding site" evidence="1">
    <location>
        <position position="394"/>
    </location>
    <ligand>
        <name>(2R)-2-phosphoglycerate</name>
        <dbReference type="ChEBI" id="CHEBI:58289"/>
    </ligand>
</feature>
<evidence type="ECO:0000255" key="1">
    <source>
        <dbReference type="HAMAP-Rule" id="MF_00318"/>
    </source>
</evidence>
<gene>
    <name evidence="1" type="primary">eno</name>
    <name type="ordered locus">CPS_4106</name>
</gene>
<dbReference type="EC" id="4.2.1.11" evidence="1"/>
<dbReference type="EMBL" id="CP000083">
    <property type="protein sequence ID" value="AAZ26286.1"/>
    <property type="molecule type" value="Genomic_DNA"/>
</dbReference>
<dbReference type="RefSeq" id="WP_011044842.1">
    <property type="nucleotide sequence ID" value="NC_003910.7"/>
</dbReference>
<dbReference type="SMR" id="Q47WR1"/>
<dbReference type="STRING" id="167879.CPS_4106"/>
<dbReference type="KEGG" id="cps:CPS_4106"/>
<dbReference type="HOGENOM" id="CLU_031223_2_1_6"/>
<dbReference type="UniPathway" id="UPA00109">
    <property type="reaction ID" value="UER00187"/>
</dbReference>
<dbReference type="Proteomes" id="UP000000547">
    <property type="component" value="Chromosome"/>
</dbReference>
<dbReference type="GO" id="GO:0009986">
    <property type="term" value="C:cell surface"/>
    <property type="evidence" value="ECO:0007669"/>
    <property type="project" value="UniProtKB-SubCell"/>
</dbReference>
<dbReference type="GO" id="GO:0005576">
    <property type="term" value="C:extracellular region"/>
    <property type="evidence" value="ECO:0007669"/>
    <property type="project" value="UniProtKB-SubCell"/>
</dbReference>
<dbReference type="GO" id="GO:0000015">
    <property type="term" value="C:phosphopyruvate hydratase complex"/>
    <property type="evidence" value="ECO:0007669"/>
    <property type="project" value="InterPro"/>
</dbReference>
<dbReference type="GO" id="GO:0000287">
    <property type="term" value="F:magnesium ion binding"/>
    <property type="evidence" value="ECO:0007669"/>
    <property type="project" value="UniProtKB-UniRule"/>
</dbReference>
<dbReference type="GO" id="GO:0004634">
    <property type="term" value="F:phosphopyruvate hydratase activity"/>
    <property type="evidence" value="ECO:0007669"/>
    <property type="project" value="UniProtKB-UniRule"/>
</dbReference>
<dbReference type="GO" id="GO:0006096">
    <property type="term" value="P:glycolytic process"/>
    <property type="evidence" value="ECO:0007669"/>
    <property type="project" value="UniProtKB-UniRule"/>
</dbReference>
<dbReference type="CDD" id="cd03313">
    <property type="entry name" value="enolase"/>
    <property type="match status" value="1"/>
</dbReference>
<dbReference type="FunFam" id="3.20.20.120:FF:000001">
    <property type="entry name" value="Enolase"/>
    <property type="match status" value="1"/>
</dbReference>
<dbReference type="FunFam" id="3.30.390.10:FF:000001">
    <property type="entry name" value="Enolase"/>
    <property type="match status" value="1"/>
</dbReference>
<dbReference type="Gene3D" id="3.20.20.120">
    <property type="entry name" value="Enolase-like C-terminal domain"/>
    <property type="match status" value="1"/>
</dbReference>
<dbReference type="Gene3D" id="3.30.390.10">
    <property type="entry name" value="Enolase-like, N-terminal domain"/>
    <property type="match status" value="1"/>
</dbReference>
<dbReference type="HAMAP" id="MF_00318">
    <property type="entry name" value="Enolase"/>
    <property type="match status" value="1"/>
</dbReference>
<dbReference type="InterPro" id="IPR000941">
    <property type="entry name" value="Enolase"/>
</dbReference>
<dbReference type="InterPro" id="IPR036849">
    <property type="entry name" value="Enolase-like_C_sf"/>
</dbReference>
<dbReference type="InterPro" id="IPR029017">
    <property type="entry name" value="Enolase-like_N"/>
</dbReference>
<dbReference type="InterPro" id="IPR020810">
    <property type="entry name" value="Enolase_C"/>
</dbReference>
<dbReference type="InterPro" id="IPR020809">
    <property type="entry name" value="Enolase_CS"/>
</dbReference>
<dbReference type="InterPro" id="IPR020811">
    <property type="entry name" value="Enolase_N"/>
</dbReference>
<dbReference type="NCBIfam" id="TIGR01060">
    <property type="entry name" value="eno"/>
    <property type="match status" value="1"/>
</dbReference>
<dbReference type="PANTHER" id="PTHR11902">
    <property type="entry name" value="ENOLASE"/>
    <property type="match status" value="1"/>
</dbReference>
<dbReference type="PANTHER" id="PTHR11902:SF1">
    <property type="entry name" value="ENOLASE"/>
    <property type="match status" value="1"/>
</dbReference>
<dbReference type="Pfam" id="PF00113">
    <property type="entry name" value="Enolase_C"/>
    <property type="match status" value="1"/>
</dbReference>
<dbReference type="Pfam" id="PF03952">
    <property type="entry name" value="Enolase_N"/>
    <property type="match status" value="1"/>
</dbReference>
<dbReference type="PIRSF" id="PIRSF001400">
    <property type="entry name" value="Enolase"/>
    <property type="match status" value="1"/>
</dbReference>
<dbReference type="PRINTS" id="PR00148">
    <property type="entry name" value="ENOLASE"/>
</dbReference>
<dbReference type="SFLD" id="SFLDS00001">
    <property type="entry name" value="Enolase"/>
    <property type="match status" value="1"/>
</dbReference>
<dbReference type="SFLD" id="SFLDF00002">
    <property type="entry name" value="enolase"/>
    <property type="match status" value="1"/>
</dbReference>
<dbReference type="SMART" id="SM01192">
    <property type="entry name" value="Enolase_C"/>
    <property type="match status" value="1"/>
</dbReference>
<dbReference type="SMART" id="SM01193">
    <property type="entry name" value="Enolase_N"/>
    <property type="match status" value="1"/>
</dbReference>
<dbReference type="SUPFAM" id="SSF51604">
    <property type="entry name" value="Enolase C-terminal domain-like"/>
    <property type="match status" value="1"/>
</dbReference>
<dbReference type="SUPFAM" id="SSF54826">
    <property type="entry name" value="Enolase N-terminal domain-like"/>
    <property type="match status" value="1"/>
</dbReference>
<dbReference type="PROSITE" id="PS00164">
    <property type="entry name" value="ENOLASE"/>
    <property type="match status" value="1"/>
</dbReference>
<reference key="1">
    <citation type="journal article" date="2005" name="Proc. Natl. Acad. Sci. U.S.A.">
        <title>The psychrophilic lifestyle as revealed by the genome sequence of Colwellia psychrerythraea 34H through genomic and proteomic analyses.</title>
        <authorList>
            <person name="Methe B.A."/>
            <person name="Nelson K.E."/>
            <person name="Deming J.W."/>
            <person name="Momen B."/>
            <person name="Melamud E."/>
            <person name="Zhang X."/>
            <person name="Moult J."/>
            <person name="Madupu R."/>
            <person name="Nelson W.C."/>
            <person name="Dodson R.J."/>
            <person name="Brinkac L.M."/>
            <person name="Daugherty S.C."/>
            <person name="Durkin A.S."/>
            <person name="DeBoy R.T."/>
            <person name="Kolonay J.F."/>
            <person name="Sullivan S.A."/>
            <person name="Zhou L."/>
            <person name="Davidsen T.M."/>
            <person name="Wu M."/>
            <person name="Huston A.L."/>
            <person name="Lewis M."/>
            <person name="Weaver B."/>
            <person name="Weidman J.F."/>
            <person name="Khouri H."/>
            <person name="Utterback T.R."/>
            <person name="Feldblyum T.V."/>
            <person name="Fraser C.M."/>
        </authorList>
    </citation>
    <scope>NUCLEOTIDE SEQUENCE [LARGE SCALE GENOMIC DNA]</scope>
    <source>
        <strain>34H / ATCC BAA-681</strain>
    </source>
</reference>
<comment type="function">
    <text evidence="1">Catalyzes the reversible conversion of 2-phosphoglycerate (2-PG) into phosphoenolpyruvate (PEP). It is essential for the degradation of carbohydrates via glycolysis.</text>
</comment>
<comment type="catalytic activity">
    <reaction evidence="1">
        <text>(2R)-2-phosphoglycerate = phosphoenolpyruvate + H2O</text>
        <dbReference type="Rhea" id="RHEA:10164"/>
        <dbReference type="ChEBI" id="CHEBI:15377"/>
        <dbReference type="ChEBI" id="CHEBI:58289"/>
        <dbReference type="ChEBI" id="CHEBI:58702"/>
        <dbReference type="EC" id="4.2.1.11"/>
    </reaction>
</comment>
<comment type="cofactor">
    <cofactor evidence="1">
        <name>Mg(2+)</name>
        <dbReference type="ChEBI" id="CHEBI:18420"/>
    </cofactor>
    <text evidence="1">Binds a second Mg(2+) ion via substrate during catalysis.</text>
</comment>
<comment type="pathway">
    <text evidence="1">Carbohydrate degradation; glycolysis; pyruvate from D-glyceraldehyde 3-phosphate: step 4/5.</text>
</comment>
<comment type="subunit">
    <text evidence="1">Component of the RNA degradosome, a multiprotein complex involved in RNA processing and mRNA degradation.</text>
</comment>
<comment type="subcellular location">
    <subcellularLocation>
        <location evidence="1">Cytoplasm</location>
    </subcellularLocation>
    <subcellularLocation>
        <location evidence="1">Secreted</location>
    </subcellularLocation>
    <subcellularLocation>
        <location evidence="1">Cell surface</location>
    </subcellularLocation>
    <text evidence="1">Fractions of enolase are present in both the cytoplasm and on the cell surface.</text>
</comment>
<comment type="similarity">
    <text evidence="1">Belongs to the enolase family.</text>
</comment>
<accession>Q47WR1</accession>
<keyword id="KW-0963">Cytoplasm</keyword>
<keyword id="KW-0324">Glycolysis</keyword>
<keyword id="KW-0456">Lyase</keyword>
<keyword id="KW-0460">Magnesium</keyword>
<keyword id="KW-0479">Metal-binding</keyword>
<keyword id="KW-0964">Secreted</keyword>
<sequence length="432" mass="45935">MSKISKILAREIMDSRGNPTVEADVYLESGAFGRAAAPSGASTGSREALELRDGDKARYLGKGVLKAVAAINVNIQAALIGQSALDQANIDQIMIDLDGTENKEQFGANAILAVSLANAKAAANEKKVQLFEHIADLNGTPGVYSLPLPMMNIINGGEHADNNVDIQEFMVQPVGAKSFREALRMGAEIFHALKKVLSSKGMSTSVGDEGGFAPNLESNADALAVIKVAVEAAGYELGKDVTLAMDCAASEFYDADKGIYDLTGEGKQFTANEFSDFLGELCKEYPIVSIEDGLDESDWDGFKYQTDLLGDKVQIVGDDLFVTNTKILARGIENGIGNSILIKFNQIGTLTETLAAIKMAKDAGFTAVISHRSGETEDATIADLAVGTAAGQIKTGSLCRSDRVSKYNQLLRIEEFLGDKAIFNGLSEVKGQ</sequence>
<organism>
    <name type="scientific">Colwellia psychrerythraea (strain 34H / ATCC BAA-681)</name>
    <name type="common">Vibrio psychroerythus</name>
    <dbReference type="NCBI Taxonomy" id="167879"/>
    <lineage>
        <taxon>Bacteria</taxon>
        <taxon>Pseudomonadati</taxon>
        <taxon>Pseudomonadota</taxon>
        <taxon>Gammaproteobacteria</taxon>
        <taxon>Alteromonadales</taxon>
        <taxon>Colwelliaceae</taxon>
        <taxon>Colwellia</taxon>
    </lineage>
</organism>
<proteinExistence type="inferred from homology"/>
<name>ENO_COLP3</name>
<protein>
    <recommendedName>
        <fullName evidence="1">Enolase</fullName>
        <ecNumber evidence="1">4.2.1.11</ecNumber>
    </recommendedName>
    <alternativeName>
        <fullName evidence="1">2-phospho-D-glycerate hydro-lyase</fullName>
    </alternativeName>
    <alternativeName>
        <fullName evidence="1">2-phosphoglycerate dehydratase</fullName>
    </alternativeName>
</protein>